<keyword id="KW-0067">ATP-binding</keyword>
<keyword id="KW-0418">Kinase</keyword>
<keyword id="KW-0547">Nucleotide-binding</keyword>
<keyword id="KW-0808">Transferase</keyword>
<organism>
    <name type="scientific">Methanococcus maripaludis (strain C5 / ATCC BAA-1333)</name>
    <dbReference type="NCBI Taxonomy" id="402880"/>
    <lineage>
        <taxon>Archaea</taxon>
        <taxon>Methanobacteriati</taxon>
        <taxon>Methanobacteriota</taxon>
        <taxon>Methanomada group</taxon>
        <taxon>Methanococci</taxon>
        <taxon>Methanococcales</taxon>
        <taxon>Methanococcaceae</taxon>
        <taxon>Methanococcus</taxon>
    </lineage>
</organism>
<protein>
    <recommendedName>
        <fullName evidence="1">2-phosphoglycerate kinase</fullName>
        <shortName evidence="1">2PGK</shortName>
        <ecNumber evidence="1">2.7.2.16</ecNumber>
    </recommendedName>
</protein>
<comment type="function">
    <text evidence="1">Catalyzes the phosphorylation of 2-phosphoglycerate to 2,3-diphosphoglycerate. Involved in the biosynthesis of cyclic 2,3-bisphosphoglycerate, a thermoprotectant.</text>
</comment>
<comment type="catalytic activity">
    <reaction evidence="1">
        <text>(2R)-2-phosphoglycerate + ATP = (2R)-2,3-bisphosphoglycerate + ADP + H(+)</text>
        <dbReference type="Rhea" id="RHEA:42408"/>
        <dbReference type="ChEBI" id="CHEBI:15378"/>
        <dbReference type="ChEBI" id="CHEBI:30616"/>
        <dbReference type="ChEBI" id="CHEBI:58248"/>
        <dbReference type="ChEBI" id="CHEBI:58289"/>
        <dbReference type="ChEBI" id="CHEBI:456216"/>
        <dbReference type="EC" id="2.7.2.16"/>
    </reaction>
</comment>
<comment type="cofactor">
    <cofactor evidence="1">
        <name>a divalent metal cation</name>
        <dbReference type="ChEBI" id="CHEBI:60240"/>
    </cofactor>
</comment>
<comment type="pathway">
    <text evidence="1">Thermoadapter biosynthesis; cyclic 2,3-diphosphoglycerate biosynthesis; cyclic 2,3-diphosphoglycerate from 2-phospho-D-glycerate: step 1/2.</text>
</comment>
<comment type="similarity">
    <text evidence="1">Belongs to the 2-phosphoglycerate kinase family.</text>
</comment>
<sequence length="313" mass="35988">MTFDENISRILVKDKEYEMPFSKGLLARSLTAAGMKPSESYTLAREIERDLNEQNVLKISKDELRRRVYYTLINRDYEGIGEKYLLWRRVLKKHSIIILVGGSSGVGTSTIAFELASRLGIPSVIGTDSIREVMRRSISKDLVPMLYESSYTAWTALRRSQWDEQDTKEMHLLGFERHVEPVLLGIESIIDRSLTEGTSVIIEGTHIVPGLMGEKYQSMPNVIFLNLTLSSEETHKKRFTARAKVSDRPLERYLENFEIIKEINQYIVEKSKENKVPVIENVSISETVQKCLEIVTERFSNLNDEPIIDSDMY</sequence>
<dbReference type="EC" id="2.7.2.16" evidence="1"/>
<dbReference type="EMBL" id="CP000609">
    <property type="protein sequence ID" value="ABO34464.1"/>
    <property type="molecule type" value="Genomic_DNA"/>
</dbReference>
<dbReference type="RefSeq" id="WP_011867924.1">
    <property type="nucleotide sequence ID" value="NC_009135.1"/>
</dbReference>
<dbReference type="STRING" id="402880.MmarC5_0147"/>
<dbReference type="GeneID" id="4927834"/>
<dbReference type="KEGG" id="mmq:MmarC5_0147"/>
<dbReference type="eggNOG" id="arCOG01967">
    <property type="taxonomic scope" value="Archaea"/>
</dbReference>
<dbReference type="HOGENOM" id="CLU_848909_0_0_2"/>
<dbReference type="OrthoDB" id="358692at2157"/>
<dbReference type="UniPathway" id="UPA00551">
    <property type="reaction ID" value="UER00609"/>
</dbReference>
<dbReference type="Proteomes" id="UP000000253">
    <property type="component" value="Chromosome"/>
</dbReference>
<dbReference type="GO" id="GO:0005524">
    <property type="term" value="F:ATP binding"/>
    <property type="evidence" value="ECO:0007669"/>
    <property type="project" value="UniProtKB-KW"/>
</dbReference>
<dbReference type="GO" id="GO:0016301">
    <property type="term" value="F:kinase activity"/>
    <property type="evidence" value="ECO:0007669"/>
    <property type="project" value="UniProtKB-KW"/>
</dbReference>
<dbReference type="GO" id="GO:0016774">
    <property type="term" value="F:phosphotransferase activity, carboxyl group as acceptor"/>
    <property type="evidence" value="ECO:0007669"/>
    <property type="project" value="UniProtKB-UniRule"/>
</dbReference>
<dbReference type="Gene3D" id="3.40.50.300">
    <property type="entry name" value="P-loop containing nucleotide triphosphate hydrolases"/>
    <property type="match status" value="1"/>
</dbReference>
<dbReference type="HAMAP" id="MF_00769">
    <property type="entry name" value="2PGK"/>
    <property type="match status" value="1"/>
</dbReference>
<dbReference type="InterPro" id="IPR020872">
    <property type="entry name" value="2PKG"/>
</dbReference>
<dbReference type="InterPro" id="IPR005144">
    <property type="entry name" value="ATP-cone_dom"/>
</dbReference>
<dbReference type="InterPro" id="IPR027417">
    <property type="entry name" value="P-loop_NTPase"/>
</dbReference>
<dbReference type="NCBIfam" id="NF003259">
    <property type="entry name" value="PRK04220.1"/>
    <property type="match status" value="1"/>
</dbReference>
<dbReference type="PANTHER" id="PTHR33477">
    <property type="entry name" value="P-LOOP NTPASE DOMAIN-CONTAINING PROTEIN LPA1 HOMOLOG 1"/>
    <property type="match status" value="1"/>
</dbReference>
<dbReference type="PANTHER" id="PTHR33477:SF3">
    <property type="entry name" value="P-LOOP NTPASE DOMAIN-CONTAINING PROTEIN LPA1 HOMOLOG 1"/>
    <property type="match status" value="1"/>
</dbReference>
<dbReference type="Pfam" id="PF03477">
    <property type="entry name" value="ATP-cone"/>
    <property type="match status" value="1"/>
</dbReference>
<dbReference type="SUPFAM" id="SSF52540">
    <property type="entry name" value="P-loop containing nucleoside triphosphate hydrolases"/>
    <property type="match status" value="1"/>
</dbReference>
<dbReference type="PROSITE" id="PS51161">
    <property type="entry name" value="ATP_CONE"/>
    <property type="match status" value="1"/>
</dbReference>
<name>PGK2_METM5</name>
<gene>
    <name evidence="1" type="primary">pgk2</name>
    <name type="ordered locus">MmarC5_0147</name>
</gene>
<reference key="1">
    <citation type="submission" date="2007-03" db="EMBL/GenBank/DDBJ databases">
        <title>Complete sequence of chromosome of Methanococcus maripaludis C5.</title>
        <authorList>
            <consortium name="US DOE Joint Genome Institute"/>
            <person name="Copeland A."/>
            <person name="Lucas S."/>
            <person name="Lapidus A."/>
            <person name="Barry K."/>
            <person name="Glavina del Rio T."/>
            <person name="Dalin E."/>
            <person name="Tice H."/>
            <person name="Pitluck S."/>
            <person name="Chertkov O."/>
            <person name="Brettin T."/>
            <person name="Bruce D."/>
            <person name="Han C."/>
            <person name="Detter J.C."/>
            <person name="Schmutz J."/>
            <person name="Larimer F."/>
            <person name="Land M."/>
            <person name="Hauser L."/>
            <person name="Kyrpides N."/>
            <person name="Mikhailova N."/>
            <person name="Sieprawska-Lupa M."/>
            <person name="Whitman W.B."/>
            <person name="Richardson P."/>
        </authorList>
    </citation>
    <scope>NUCLEOTIDE SEQUENCE [LARGE SCALE GENOMIC DNA]</scope>
    <source>
        <strain>C5 / ATCC BAA-1333</strain>
    </source>
</reference>
<proteinExistence type="inferred from homology"/>
<accession>A4FW93</accession>
<feature type="chain" id="PRO_1000062235" description="2-phosphoglycerate kinase">
    <location>
        <begin position="1"/>
        <end position="313"/>
    </location>
</feature>
<feature type="domain" description="ATP-cone" evidence="1">
    <location>
        <begin position="8"/>
        <end position="95"/>
    </location>
</feature>
<evidence type="ECO:0000255" key="1">
    <source>
        <dbReference type="HAMAP-Rule" id="MF_00769"/>
    </source>
</evidence>